<evidence type="ECO:0000255" key="1">
    <source>
        <dbReference type="HAMAP-Rule" id="MF_00052"/>
    </source>
</evidence>
<evidence type="ECO:0000255" key="2">
    <source>
        <dbReference type="PROSITE-ProRule" id="PRU01319"/>
    </source>
</evidence>
<reference key="1">
    <citation type="journal article" date="2009" name="ISME J.">
        <title>The genome sequence of the psychrophilic archaeon, Methanococcoides burtonii: the role of genome evolution in cold adaptation.</title>
        <authorList>
            <person name="Allen M.A."/>
            <person name="Lauro F.M."/>
            <person name="Williams T.J."/>
            <person name="Burg D."/>
            <person name="Siddiqui K.S."/>
            <person name="De Francisci D."/>
            <person name="Chong K.W."/>
            <person name="Pilak O."/>
            <person name="Chew H.H."/>
            <person name="De Maere M.Z."/>
            <person name="Ting L."/>
            <person name="Katrib M."/>
            <person name="Ng C."/>
            <person name="Sowers K.R."/>
            <person name="Galperin M.Y."/>
            <person name="Anderson I.J."/>
            <person name="Ivanova N."/>
            <person name="Dalin E."/>
            <person name="Martinez M."/>
            <person name="Lapidus A."/>
            <person name="Hauser L."/>
            <person name="Land M."/>
            <person name="Thomas T."/>
            <person name="Cavicchioli R."/>
        </authorList>
    </citation>
    <scope>NUCLEOTIDE SEQUENCE [LARGE SCALE GENOMIC DNA]</scope>
    <source>
        <strain>DSM 6242 / NBRC 107633 / OCM 468 / ACE-M</strain>
    </source>
</reference>
<accession>Q12YN9</accession>
<name>RNH2_METBU</name>
<organism>
    <name type="scientific">Methanococcoides burtonii (strain DSM 6242 / NBRC 107633 / OCM 468 / ACE-M)</name>
    <dbReference type="NCBI Taxonomy" id="259564"/>
    <lineage>
        <taxon>Archaea</taxon>
        <taxon>Methanobacteriati</taxon>
        <taxon>Methanobacteriota</taxon>
        <taxon>Stenosarchaea group</taxon>
        <taxon>Methanomicrobia</taxon>
        <taxon>Methanosarcinales</taxon>
        <taxon>Methanosarcinaceae</taxon>
        <taxon>Methanococcoides</taxon>
    </lineage>
</organism>
<gene>
    <name evidence="1" type="primary">rnhB</name>
    <name type="ordered locus">Mbur_0450</name>
</gene>
<comment type="function">
    <text evidence="1">Endonuclease that specifically degrades the RNA of RNA-DNA hybrids.</text>
</comment>
<comment type="catalytic activity">
    <reaction evidence="1">
        <text>Endonucleolytic cleavage to 5'-phosphomonoester.</text>
        <dbReference type="EC" id="3.1.26.4"/>
    </reaction>
</comment>
<comment type="cofactor">
    <cofactor evidence="1">
        <name>Mn(2+)</name>
        <dbReference type="ChEBI" id="CHEBI:29035"/>
    </cofactor>
    <cofactor evidence="1">
        <name>Mg(2+)</name>
        <dbReference type="ChEBI" id="CHEBI:18420"/>
    </cofactor>
    <text evidence="1">Manganese or magnesium. Binds 1 divalent metal ion per monomer in the absence of substrate. May bind a second metal ion after substrate binding.</text>
</comment>
<comment type="subcellular location">
    <subcellularLocation>
        <location evidence="1">Cytoplasm</location>
    </subcellularLocation>
</comment>
<comment type="similarity">
    <text evidence="1">Belongs to the RNase HII family.</text>
</comment>
<proteinExistence type="inferred from homology"/>
<sequence>MKIIGIDEAGKGPVIGPMCIGGVRIDEDKSNALKNLGVADSKKLSPKRRVHLAAQIKKYADGWFVYEVSPNQIDELRKLMSMNDIMVLAFGSVIEELPSDKIYADAADVKEERFGKRLFDNYMEKHPDVSPPEVISKHGADDLFPVVSAASILAKVRRDELIEKIKVDMGVDIGSGYPSDPKTKKFLENWYRENSSFPDIVRHSWKTAQKFIQ</sequence>
<keyword id="KW-0963">Cytoplasm</keyword>
<keyword id="KW-0255">Endonuclease</keyword>
<keyword id="KW-0378">Hydrolase</keyword>
<keyword id="KW-0464">Manganese</keyword>
<keyword id="KW-0479">Metal-binding</keyword>
<keyword id="KW-0540">Nuclease</keyword>
<dbReference type="EC" id="3.1.26.4" evidence="1"/>
<dbReference type="EMBL" id="CP000300">
    <property type="protein sequence ID" value="ABE51437.1"/>
    <property type="molecule type" value="Genomic_DNA"/>
</dbReference>
<dbReference type="RefSeq" id="WP_011498599.1">
    <property type="nucleotide sequence ID" value="NC_007955.1"/>
</dbReference>
<dbReference type="SMR" id="Q12YN9"/>
<dbReference type="STRING" id="259564.Mbur_0450"/>
<dbReference type="GeneID" id="3997646"/>
<dbReference type="KEGG" id="mbu:Mbur_0450"/>
<dbReference type="HOGENOM" id="CLU_036532_0_4_2"/>
<dbReference type="OrthoDB" id="33866at2157"/>
<dbReference type="Proteomes" id="UP000001979">
    <property type="component" value="Chromosome"/>
</dbReference>
<dbReference type="GO" id="GO:0005737">
    <property type="term" value="C:cytoplasm"/>
    <property type="evidence" value="ECO:0007669"/>
    <property type="project" value="UniProtKB-SubCell"/>
</dbReference>
<dbReference type="GO" id="GO:0032299">
    <property type="term" value="C:ribonuclease H2 complex"/>
    <property type="evidence" value="ECO:0007669"/>
    <property type="project" value="TreeGrafter"/>
</dbReference>
<dbReference type="GO" id="GO:0030145">
    <property type="term" value="F:manganese ion binding"/>
    <property type="evidence" value="ECO:0007669"/>
    <property type="project" value="UniProtKB-UniRule"/>
</dbReference>
<dbReference type="GO" id="GO:0003723">
    <property type="term" value="F:RNA binding"/>
    <property type="evidence" value="ECO:0007669"/>
    <property type="project" value="InterPro"/>
</dbReference>
<dbReference type="GO" id="GO:0004523">
    <property type="term" value="F:RNA-DNA hybrid ribonuclease activity"/>
    <property type="evidence" value="ECO:0007669"/>
    <property type="project" value="UniProtKB-UniRule"/>
</dbReference>
<dbReference type="GO" id="GO:0043137">
    <property type="term" value="P:DNA replication, removal of RNA primer"/>
    <property type="evidence" value="ECO:0007669"/>
    <property type="project" value="TreeGrafter"/>
</dbReference>
<dbReference type="GO" id="GO:0006298">
    <property type="term" value="P:mismatch repair"/>
    <property type="evidence" value="ECO:0007669"/>
    <property type="project" value="TreeGrafter"/>
</dbReference>
<dbReference type="CDD" id="cd07180">
    <property type="entry name" value="RNase_HII_archaea_like"/>
    <property type="match status" value="1"/>
</dbReference>
<dbReference type="FunFam" id="1.10.10.460:FF:000001">
    <property type="entry name" value="Ribonuclease"/>
    <property type="match status" value="1"/>
</dbReference>
<dbReference type="FunFam" id="3.30.420.10:FF:000139">
    <property type="entry name" value="Ribonuclease HII"/>
    <property type="match status" value="1"/>
</dbReference>
<dbReference type="Gene3D" id="3.30.420.10">
    <property type="entry name" value="Ribonuclease H-like superfamily/Ribonuclease H"/>
    <property type="match status" value="1"/>
</dbReference>
<dbReference type="Gene3D" id="1.10.10.460">
    <property type="entry name" value="Ribonuclease hii. Domain 2"/>
    <property type="match status" value="1"/>
</dbReference>
<dbReference type="HAMAP" id="MF_00052_A">
    <property type="entry name" value="RNase_HII_A"/>
    <property type="match status" value="1"/>
</dbReference>
<dbReference type="InterPro" id="IPR004649">
    <property type="entry name" value="RNase_H2_suA"/>
</dbReference>
<dbReference type="InterPro" id="IPR001352">
    <property type="entry name" value="RNase_HII/HIII"/>
</dbReference>
<dbReference type="InterPro" id="IPR024567">
    <property type="entry name" value="RNase_HII/HIII_dom"/>
</dbReference>
<dbReference type="InterPro" id="IPR020787">
    <property type="entry name" value="RNase_HII_arc"/>
</dbReference>
<dbReference type="InterPro" id="IPR023160">
    <property type="entry name" value="RNase_HII_hlx-loop-hlx_cap_dom"/>
</dbReference>
<dbReference type="InterPro" id="IPR012337">
    <property type="entry name" value="RNaseH-like_sf"/>
</dbReference>
<dbReference type="InterPro" id="IPR036397">
    <property type="entry name" value="RNaseH_sf"/>
</dbReference>
<dbReference type="NCBIfam" id="TIGR00729">
    <property type="entry name" value="ribonuclease HII"/>
    <property type="match status" value="1"/>
</dbReference>
<dbReference type="PANTHER" id="PTHR10954:SF23">
    <property type="entry name" value="RIBONUCLEASE"/>
    <property type="match status" value="1"/>
</dbReference>
<dbReference type="PANTHER" id="PTHR10954">
    <property type="entry name" value="RIBONUCLEASE H2 SUBUNIT A"/>
    <property type="match status" value="1"/>
</dbReference>
<dbReference type="Pfam" id="PF01351">
    <property type="entry name" value="RNase_HII"/>
    <property type="match status" value="1"/>
</dbReference>
<dbReference type="SUPFAM" id="SSF53098">
    <property type="entry name" value="Ribonuclease H-like"/>
    <property type="match status" value="1"/>
</dbReference>
<dbReference type="PROSITE" id="PS51975">
    <property type="entry name" value="RNASE_H_2"/>
    <property type="match status" value="1"/>
</dbReference>
<feature type="chain" id="PRO_0000334978" description="Ribonuclease HII">
    <location>
        <begin position="1"/>
        <end position="213"/>
    </location>
</feature>
<feature type="domain" description="RNase H type-2" evidence="2">
    <location>
        <begin position="1"/>
        <end position="213"/>
    </location>
</feature>
<feature type="binding site" evidence="1">
    <location>
        <position position="7"/>
    </location>
    <ligand>
        <name>a divalent metal cation</name>
        <dbReference type="ChEBI" id="CHEBI:60240"/>
    </ligand>
</feature>
<feature type="binding site" evidence="1">
    <location>
        <position position="8"/>
    </location>
    <ligand>
        <name>a divalent metal cation</name>
        <dbReference type="ChEBI" id="CHEBI:60240"/>
    </ligand>
</feature>
<feature type="binding site" evidence="1">
    <location>
        <position position="105"/>
    </location>
    <ligand>
        <name>a divalent metal cation</name>
        <dbReference type="ChEBI" id="CHEBI:60240"/>
    </ligand>
</feature>
<protein>
    <recommendedName>
        <fullName evidence="1">Ribonuclease HII</fullName>
        <shortName evidence="1">RNase HII</shortName>
        <ecNumber evidence="1">3.1.26.4</ecNumber>
    </recommendedName>
</protein>